<protein>
    <recommendedName>
        <fullName evidence="3">Beta/delta-urticatoxin-Uf2b</fullName>
        <shortName evidence="3">Beta/delta-Uf2b</shortName>
    </recommendedName>
</protein>
<comment type="function">
    <text evidence="1">Plant defense neurotoxin that causes pain and systemic symptoms in mammals via modulation of voltage-gated sodium channels (Nav). Potent modulator of human Nav1.5/SCN5A (EC(50)=55 nM), Nav1.6/SCN8A (EC(50)=0.86 nM), and Nav1.7/SCN9A (EC(50)=208 nM), where it shifts the activation threshold to more negative potentials and delays fast inactivation. Also shifts the voltage-dependence of steady-state fast inactivation of Nav1.6/SCN8A, but not that of Nav1.5/SCN5A or Nav1.7/SCN9A. On Nav1.7/SCN9A, principally acts by binding to extracellular loops of domain IV (Nav site 3). In vivo, intraplantar injection into mice causes numerous dose-dependent, immediate, and long-lasting spontaneous pain behaviors, while no swelling is observed in the injected paw. At the highest doses tested, systemic symptoms including hypokinesia and hypersalivation are observed.</text>
</comment>
<comment type="subcellular location">
    <subcellularLocation>
        <location evidence="5">Secreted</location>
    </subcellularLocation>
</comment>
<comment type="tissue specificity">
    <text evidence="5">Expressed in trichomes, that are stiff epidermal hairs located on the surface of petioles and leaves.</text>
</comment>
<comment type="domain">
    <text evidence="4">The presence of 'disulfide through disulfide knots' structurally defines this protein as a knottin. This toxin contains 2 'disulfide through disulfide knots'.</text>
</comment>
<comment type="similarity">
    <text evidence="4">Belongs to the urticatoxin-2 family.</text>
</comment>
<organism>
    <name type="scientific">Urtica ferox</name>
    <name type="common">Tree nettle</name>
    <dbReference type="NCBI Taxonomy" id="1435581"/>
    <lineage>
        <taxon>Eukaryota</taxon>
        <taxon>Viridiplantae</taxon>
        <taxon>Streptophyta</taxon>
        <taxon>Embryophyta</taxon>
        <taxon>Tracheophyta</taxon>
        <taxon>Spermatophyta</taxon>
        <taxon>Magnoliopsida</taxon>
        <taxon>eudicotyledons</taxon>
        <taxon>Gunneridae</taxon>
        <taxon>Pentapetalae</taxon>
        <taxon>rosids</taxon>
        <taxon>fabids</taxon>
        <taxon>Rosales</taxon>
        <taxon>Urticaceae</taxon>
        <taxon>Urtica</taxon>
    </lineage>
</organism>
<proteinExistence type="inferred from homology"/>
<name>NAVTB_URTFR</name>
<dbReference type="EMBL" id="OK376601">
    <property type="protein sequence ID" value="UVC57619.1"/>
    <property type="molecule type" value="Genomic_DNA"/>
</dbReference>
<dbReference type="GO" id="GO:0005576">
    <property type="term" value="C:extracellular region"/>
    <property type="evidence" value="ECO:0007669"/>
    <property type="project" value="UniProtKB-SubCell"/>
</dbReference>
<dbReference type="GO" id="GO:0017080">
    <property type="term" value="F:sodium channel regulator activity"/>
    <property type="evidence" value="ECO:0007669"/>
    <property type="project" value="UniProtKB-KW"/>
</dbReference>
<dbReference type="GO" id="GO:0090729">
    <property type="term" value="F:toxin activity"/>
    <property type="evidence" value="ECO:0007669"/>
    <property type="project" value="UniProtKB-KW"/>
</dbReference>
<dbReference type="GO" id="GO:0006952">
    <property type="term" value="P:defense response"/>
    <property type="evidence" value="ECO:0007669"/>
    <property type="project" value="UniProtKB-KW"/>
</dbReference>
<reference evidence="6" key="1">
    <citation type="journal article" date="2022" name="J. Biol. Chem.">
        <title>Neurotoxic and cytotoxic peptides underlie the painful stings of the tree nettle Urtica ferox.</title>
        <authorList>
            <person name="Xie J."/>
            <person name="Robinson S.D."/>
            <person name="Gilding E.K."/>
            <person name="Jami S."/>
            <person name="Deuis J.R."/>
            <person name="Rehm F.B.H."/>
            <person name="Yap K."/>
            <person name="Ragnarsson L."/>
            <person name="Chan L.Y."/>
            <person name="Hamilton B.R."/>
            <person name="Harvey P.J."/>
            <person name="Craik D.J."/>
            <person name="Vetter I."/>
            <person name="Durek T."/>
        </authorList>
    </citation>
    <scope>NUCLEOTIDE SEQUENCE [GENOMIC DNA]</scope>
</reference>
<evidence type="ECO:0000250" key="1">
    <source>
        <dbReference type="UniProtKB" id="A0A976XJR9"/>
    </source>
</evidence>
<evidence type="ECO:0000255" key="2"/>
<evidence type="ECO:0000303" key="3">
    <source>
    </source>
</evidence>
<evidence type="ECO:0000305" key="4"/>
<evidence type="ECO:0000305" key="5">
    <source>
    </source>
</evidence>
<evidence type="ECO:0000312" key="6">
    <source>
        <dbReference type="EMBL" id="UVC57619.1"/>
    </source>
</evidence>
<keyword id="KW-1015">Disulfide bond</keyword>
<keyword id="KW-0872">Ion channel impairing toxin</keyword>
<keyword id="KW-0960">Knottin</keyword>
<keyword id="KW-0528">Neurotoxin</keyword>
<keyword id="KW-0611">Plant defense</keyword>
<keyword id="KW-0964">Secreted</keyword>
<keyword id="KW-0732">Signal</keyword>
<keyword id="KW-0800">Toxin</keyword>
<keyword id="KW-0738">Voltage-gated sodium channel impairing toxin</keyword>
<feature type="signal peptide" evidence="2">
    <location>
        <begin position="1"/>
        <end position="18"/>
    </location>
</feature>
<feature type="propeptide" id="PRO_0000459314" evidence="1">
    <location>
        <begin position="19"/>
        <end position="80"/>
    </location>
</feature>
<feature type="chain" id="PRO_0000459315" description="Beta/delta-urticatoxin-Uf2b" evidence="1">
    <location>
        <begin position="81"/>
        <end position="143"/>
    </location>
</feature>
<feature type="disulfide bond" evidence="4">
    <location>
        <begin position="83"/>
        <end position="100"/>
    </location>
</feature>
<feature type="disulfide bond" evidence="4">
    <location>
        <begin position="90"/>
        <end position="105"/>
    </location>
</feature>
<feature type="disulfide bond" evidence="4">
    <location>
        <begin position="99"/>
        <end position="113"/>
    </location>
</feature>
<feature type="disulfide bond" evidence="4">
    <location>
        <begin position="115"/>
        <end position="129"/>
    </location>
</feature>
<feature type="disulfide bond" evidence="4">
    <location>
        <begin position="122"/>
        <end position="134"/>
    </location>
</feature>
<feature type="disulfide bond" evidence="4">
    <location>
        <begin position="128"/>
        <end position="142"/>
    </location>
</feature>
<sequence length="143" mass="15075">MGAIVLVALMALVASSSAFSDIEHNIMKLEGENIISSSSTPNDDQSSFSDGTSDMVESLFLNSGNRNLVLMMLSGRPQPNGRCIGDAQPCGFLVSDKGCCDPNYCSQYSKGKCICVPKGQPCGLLHFCCLGLTCDGSFNGTCK</sequence>
<accession>P0DRB3</accession>